<keyword id="KW-0004">4Fe-4S</keyword>
<keyword id="KW-0067">ATP-binding</keyword>
<keyword id="KW-0963">Cytoplasm</keyword>
<keyword id="KW-0408">Iron</keyword>
<keyword id="KW-0411">Iron-sulfur</keyword>
<keyword id="KW-0460">Magnesium</keyword>
<keyword id="KW-0479">Metal-binding</keyword>
<keyword id="KW-0547">Nucleotide-binding</keyword>
<keyword id="KW-0694">RNA-binding</keyword>
<keyword id="KW-0808">Transferase</keyword>
<keyword id="KW-0819">tRNA processing</keyword>
<keyword id="KW-0820">tRNA-binding</keyword>
<name>TTCA_LEGPC</name>
<accession>A5IGL1</accession>
<organism>
    <name type="scientific">Legionella pneumophila (strain Corby)</name>
    <dbReference type="NCBI Taxonomy" id="400673"/>
    <lineage>
        <taxon>Bacteria</taxon>
        <taxon>Pseudomonadati</taxon>
        <taxon>Pseudomonadota</taxon>
        <taxon>Gammaproteobacteria</taxon>
        <taxon>Legionellales</taxon>
        <taxon>Legionellaceae</taxon>
        <taxon>Legionella</taxon>
    </lineage>
</organism>
<reference key="1">
    <citation type="submission" date="2006-11" db="EMBL/GenBank/DDBJ databases">
        <title>Identification and characterization of a new conjugation/ type IVA secretion system (trb/tra) of L. pneumophila Corby localized on a mobile genomic island.</title>
        <authorList>
            <person name="Gloeckner G."/>
            <person name="Albert-Weissenberger C."/>
            <person name="Weinmann E."/>
            <person name="Jacobi S."/>
            <person name="Schunder E."/>
            <person name="Steinert M."/>
            <person name="Buchrieser C."/>
            <person name="Hacker J."/>
            <person name="Heuner K."/>
        </authorList>
    </citation>
    <scope>NUCLEOTIDE SEQUENCE [LARGE SCALE GENOMIC DNA]</scope>
    <source>
        <strain>Corby</strain>
    </source>
</reference>
<proteinExistence type="inferred from homology"/>
<feature type="chain" id="PRO_0000348758" description="tRNA-cytidine(32) 2-sulfurtransferase">
    <location>
        <begin position="1"/>
        <end position="283"/>
    </location>
</feature>
<feature type="short sequence motif" description="PP-loop motif" evidence="1">
    <location>
        <begin position="37"/>
        <end position="42"/>
    </location>
</feature>
<feature type="binding site" evidence="1">
    <location>
        <position position="112"/>
    </location>
    <ligand>
        <name>[4Fe-4S] cluster</name>
        <dbReference type="ChEBI" id="CHEBI:49883"/>
    </ligand>
</feature>
<feature type="binding site" evidence="1">
    <location>
        <position position="115"/>
    </location>
    <ligand>
        <name>[4Fe-4S] cluster</name>
        <dbReference type="ChEBI" id="CHEBI:49883"/>
    </ligand>
</feature>
<feature type="binding site" evidence="1">
    <location>
        <position position="203"/>
    </location>
    <ligand>
        <name>[4Fe-4S] cluster</name>
        <dbReference type="ChEBI" id="CHEBI:49883"/>
    </ligand>
</feature>
<comment type="function">
    <text evidence="1">Catalyzes the ATP-dependent 2-thiolation of cytidine in position 32 of tRNA, to form 2-thiocytidine (s(2)C32). The sulfur atoms are provided by the cysteine/cysteine desulfurase (IscS) system.</text>
</comment>
<comment type="catalytic activity">
    <reaction evidence="1">
        <text>cytidine(32) in tRNA + S-sulfanyl-L-cysteinyl-[cysteine desulfurase] + AH2 + ATP = 2-thiocytidine(32) in tRNA + L-cysteinyl-[cysteine desulfurase] + A + AMP + diphosphate + H(+)</text>
        <dbReference type="Rhea" id="RHEA:57048"/>
        <dbReference type="Rhea" id="RHEA-COMP:10288"/>
        <dbReference type="Rhea" id="RHEA-COMP:12157"/>
        <dbReference type="Rhea" id="RHEA-COMP:12158"/>
        <dbReference type="Rhea" id="RHEA-COMP:14821"/>
        <dbReference type="ChEBI" id="CHEBI:13193"/>
        <dbReference type="ChEBI" id="CHEBI:15378"/>
        <dbReference type="ChEBI" id="CHEBI:17499"/>
        <dbReference type="ChEBI" id="CHEBI:29950"/>
        <dbReference type="ChEBI" id="CHEBI:30616"/>
        <dbReference type="ChEBI" id="CHEBI:33019"/>
        <dbReference type="ChEBI" id="CHEBI:61963"/>
        <dbReference type="ChEBI" id="CHEBI:82748"/>
        <dbReference type="ChEBI" id="CHEBI:141453"/>
        <dbReference type="ChEBI" id="CHEBI:456215"/>
    </reaction>
    <physiologicalReaction direction="left-to-right" evidence="1">
        <dbReference type="Rhea" id="RHEA:57049"/>
    </physiologicalReaction>
</comment>
<comment type="cofactor">
    <cofactor evidence="1">
        <name>Mg(2+)</name>
        <dbReference type="ChEBI" id="CHEBI:18420"/>
    </cofactor>
</comment>
<comment type="cofactor">
    <cofactor evidence="1">
        <name>[4Fe-4S] cluster</name>
        <dbReference type="ChEBI" id="CHEBI:49883"/>
    </cofactor>
    <text evidence="1">Binds 1 [4Fe-4S] cluster per subunit. The cluster is chelated by three Cys residues, the fourth Fe has a free coordination site that may bind a sulfur atom transferred from the persulfide of IscS.</text>
</comment>
<comment type="pathway">
    <text evidence="1">tRNA modification.</text>
</comment>
<comment type="subunit">
    <text evidence="1">Homodimer.</text>
</comment>
<comment type="subcellular location">
    <subcellularLocation>
        <location evidence="1">Cytoplasm</location>
    </subcellularLocation>
</comment>
<comment type="miscellaneous">
    <text evidence="1">The thiolation reaction likely consists of two steps: a first activation step by ATP to form an adenylated intermediate of the target base of tRNA, and a second nucleophilic substitution step of the sulfur (S) atom supplied by the hydrosulfide attached to the Fe-S cluster.</text>
</comment>
<comment type="similarity">
    <text evidence="1">Belongs to the TtcA family.</text>
</comment>
<gene>
    <name evidence="1" type="primary">ttcA</name>
    <name type="ordered locus">LPC_2596</name>
</gene>
<sequence>MSSNPSSVEKKLLHYTGKAIADFNMIRHGDRVMVCLSGGKDSFTLLTILNQLRIKSGNKFEIFAFTLDQAQPGWNDACLRQWLAEKSIPHEILTRDTYSIVKEKIPEGKTYCSLCSRLRRGIIYRYAEENGFNKIALGHHRDDLIRTLMMSILYNGDIRSMPPKLLSDNKKHIVIRPLCYVQEKDIITFASEQAFPIIPCNLCGSQENLMRKKVASLIDQLAIENPKVPSNMLHALQSLKPSQLMDQNFWNFKNLEDGLETAQSVQCEEVFNAQEFEFEDEKI</sequence>
<evidence type="ECO:0000255" key="1">
    <source>
        <dbReference type="HAMAP-Rule" id="MF_01850"/>
    </source>
</evidence>
<protein>
    <recommendedName>
        <fullName evidence="1">tRNA-cytidine(32) 2-sulfurtransferase</fullName>
        <ecNumber evidence="1">2.8.1.-</ecNumber>
    </recommendedName>
    <alternativeName>
        <fullName evidence="1">Two-thiocytidine biosynthesis protein A</fullName>
    </alternativeName>
    <alternativeName>
        <fullName evidence="1">tRNA 2-thiocytidine biosynthesis protein TtcA</fullName>
    </alternativeName>
</protein>
<dbReference type="EC" id="2.8.1.-" evidence="1"/>
<dbReference type="EMBL" id="CP000675">
    <property type="protein sequence ID" value="ABQ56511.1"/>
    <property type="molecule type" value="Genomic_DNA"/>
</dbReference>
<dbReference type="RefSeq" id="WP_011945847.1">
    <property type="nucleotide sequence ID" value="NC_009494.2"/>
</dbReference>
<dbReference type="SMR" id="A5IGL1"/>
<dbReference type="KEGG" id="lpc:LPC_2596"/>
<dbReference type="HOGENOM" id="CLU_026481_0_0_6"/>
<dbReference type="GO" id="GO:0005737">
    <property type="term" value="C:cytoplasm"/>
    <property type="evidence" value="ECO:0007669"/>
    <property type="project" value="UniProtKB-SubCell"/>
</dbReference>
<dbReference type="GO" id="GO:0051539">
    <property type="term" value="F:4 iron, 4 sulfur cluster binding"/>
    <property type="evidence" value="ECO:0007669"/>
    <property type="project" value="UniProtKB-UniRule"/>
</dbReference>
<dbReference type="GO" id="GO:0005524">
    <property type="term" value="F:ATP binding"/>
    <property type="evidence" value="ECO:0007669"/>
    <property type="project" value="UniProtKB-UniRule"/>
</dbReference>
<dbReference type="GO" id="GO:0000287">
    <property type="term" value="F:magnesium ion binding"/>
    <property type="evidence" value="ECO:0007669"/>
    <property type="project" value="UniProtKB-UniRule"/>
</dbReference>
<dbReference type="GO" id="GO:0016783">
    <property type="term" value="F:sulfurtransferase activity"/>
    <property type="evidence" value="ECO:0007669"/>
    <property type="project" value="UniProtKB-UniRule"/>
</dbReference>
<dbReference type="GO" id="GO:0000049">
    <property type="term" value="F:tRNA binding"/>
    <property type="evidence" value="ECO:0007669"/>
    <property type="project" value="UniProtKB-KW"/>
</dbReference>
<dbReference type="GO" id="GO:0034227">
    <property type="term" value="P:tRNA thio-modification"/>
    <property type="evidence" value="ECO:0007669"/>
    <property type="project" value="UniProtKB-UniRule"/>
</dbReference>
<dbReference type="CDD" id="cd24138">
    <property type="entry name" value="TtcA-like"/>
    <property type="match status" value="1"/>
</dbReference>
<dbReference type="Gene3D" id="3.40.50.620">
    <property type="entry name" value="HUPs"/>
    <property type="match status" value="1"/>
</dbReference>
<dbReference type="HAMAP" id="MF_01850">
    <property type="entry name" value="TtcA"/>
    <property type="match status" value="1"/>
</dbReference>
<dbReference type="InterPro" id="IPR014729">
    <property type="entry name" value="Rossmann-like_a/b/a_fold"/>
</dbReference>
<dbReference type="InterPro" id="IPR011063">
    <property type="entry name" value="TilS/TtcA_N"/>
</dbReference>
<dbReference type="InterPro" id="IPR012089">
    <property type="entry name" value="tRNA_Cyd_32_2_STrfase"/>
</dbReference>
<dbReference type="InterPro" id="IPR035107">
    <property type="entry name" value="tRNA_thiolation_TtcA_Ctu1"/>
</dbReference>
<dbReference type="NCBIfam" id="NF007972">
    <property type="entry name" value="PRK10696.1"/>
    <property type="match status" value="1"/>
</dbReference>
<dbReference type="PANTHER" id="PTHR43686:SF1">
    <property type="entry name" value="AMINOTRAN_5 DOMAIN-CONTAINING PROTEIN"/>
    <property type="match status" value="1"/>
</dbReference>
<dbReference type="PANTHER" id="PTHR43686">
    <property type="entry name" value="SULFURTRANSFERASE-RELATED"/>
    <property type="match status" value="1"/>
</dbReference>
<dbReference type="Pfam" id="PF01171">
    <property type="entry name" value="ATP_bind_3"/>
    <property type="match status" value="1"/>
</dbReference>
<dbReference type="PIRSF" id="PIRSF004976">
    <property type="entry name" value="ATPase_YdaO"/>
    <property type="match status" value="1"/>
</dbReference>
<dbReference type="SUPFAM" id="SSF52402">
    <property type="entry name" value="Adenine nucleotide alpha hydrolases-like"/>
    <property type="match status" value="1"/>
</dbReference>